<evidence type="ECO:0000250" key="1"/>
<evidence type="ECO:0000305" key="2"/>
<organism>
    <name type="scientific">Ostreococcus tauri</name>
    <dbReference type="NCBI Taxonomy" id="70448"/>
    <lineage>
        <taxon>Eukaryota</taxon>
        <taxon>Viridiplantae</taxon>
        <taxon>Chlorophyta</taxon>
        <taxon>Mamiellophyceae</taxon>
        <taxon>Mamiellales</taxon>
        <taxon>Bathycoccaceae</taxon>
        <taxon>Ostreococcus</taxon>
    </lineage>
</organism>
<accession>Q0P3M0</accession>
<name>RK23_OSTTA</name>
<gene>
    <name type="primary">rpl23</name>
    <name type="ordered locus">OtCpg00320</name>
</gene>
<proteinExistence type="inferred from homology"/>
<keyword id="KW-0150">Chloroplast</keyword>
<keyword id="KW-0934">Plastid</keyword>
<keyword id="KW-1185">Reference proteome</keyword>
<keyword id="KW-0687">Ribonucleoprotein</keyword>
<keyword id="KW-0689">Ribosomal protein</keyword>
<keyword id="KW-0694">RNA-binding</keyword>
<keyword id="KW-0699">rRNA-binding</keyword>
<feature type="chain" id="PRO_0000272915" description="Large ribosomal subunit protein uL23c">
    <location>
        <begin position="1"/>
        <end position="87"/>
    </location>
</feature>
<geneLocation type="chloroplast"/>
<comment type="function">
    <text evidence="1">Binds to 23S rRNA.</text>
</comment>
<comment type="subunit">
    <text evidence="1">Part of the 50S ribosomal subunit.</text>
</comment>
<comment type="subcellular location">
    <subcellularLocation>
        <location>Plastid</location>
        <location>Chloroplast</location>
    </subcellularLocation>
</comment>
<comment type="similarity">
    <text evidence="2">Belongs to the universal ribosomal protein uL23 family.</text>
</comment>
<reference key="1">
    <citation type="journal article" date="2007" name="Mol. Biol. Evol.">
        <title>The complete chloroplast and mitochondrial DNA sequence of Ostreococcus tauri: organelle genomes of the smallest eukaryote are examples of compaction.</title>
        <authorList>
            <person name="Robbens S."/>
            <person name="Derelle E."/>
            <person name="Ferraz C."/>
            <person name="Wuyts J."/>
            <person name="Moreau H."/>
            <person name="Van de Peer Y."/>
        </authorList>
    </citation>
    <scope>NUCLEOTIDE SEQUENCE [LARGE SCALE GENOMIC DNA]</scope>
    <source>
        <strain>OTTH0595</strain>
    </source>
</reference>
<protein>
    <recommendedName>
        <fullName evidence="2">Large ribosomal subunit protein uL23c</fullName>
    </recommendedName>
    <alternativeName>
        <fullName>50S ribosomal protein L23, chloroplastic</fullName>
    </alternativeName>
</protein>
<sequence length="87" mass="10080">MIDFIQRVVVTQKSTMLLESERYTFDVDVNLSKTDIKTLIQDLYGVQVVAVNTHRLPRRKTRFGGVKTRTKRAIIRLKNGDTLPIFD</sequence>
<dbReference type="EMBL" id="CR954199">
    <property type="protein sequence ID" value="CAL36357.1"/>
    <property type="molecule type" value="Genomic_DNA"/>
</dbReference>
<dbReference type="RefSeq" id="YP_717235.1">
    <property type="nucleotide sequence ID" value="NC_008289.1"/>
</dbReference>
<dbReference type="SMR" id="Q0P3M0"/>
<dbReference type="FunCoup" id="Q0P3M0">
    <property type="interactions" value="66"/>
</dbReference>
<dbReference type="STRING" id="70448.Q0P3M0"/>
<dbReference type="GeneID" id="4238793"/>
<dbReference type="KEGG" id="ota:OstapCp32"/>
<dbReference type="eggNOG" id="ENOG502SCW7">
    <property type="taxonomic scope" value="Eukaryota"/>
</dbReference>
<dbReference type="InParanoid" id="Q0P3M0"/>
<dbReference type="Proteomes" id="UP000009170">
    <property type="component" value="Chloroplast"/>
</dbReference>
<dbReference type="GO" id="GO:0009507">
    <property type="term" value="C:chloroplast"/>
    <property type="evidence" value="ECO:0007669"/>
    <property type="project" value="UniProtKB-SubCell"/>
</dbReference>
<dbReference type="GO" id="GO:1990904">
    <property type="term" value="C:ribonucleoprotein complex"/>
    <property type="evidence" value="ECO:0007669"/>
    <property type="project" value="UniProtKB-KW"/>
</dbReference>
<dbReference type="GO" id="GO:0005840">
    <property type="term" value="C:ribosome"/>
    <property type="evidence" value="ECO:0007669"/>
    <property type="project" value="UniProtKB-KW"/>
</dbReference>
<dbReference type="GO" id="GO:0019843">
    <property type="term" value="F:rRNA binding"/>
    <property type="evidence" value="ECO:0007669"/>
    <property type="project" value="UniProtKB-UniRule"/>
</dbReference>
<dbReference type="GO" id="GO:0003735">
    <property type="term" value="F:structural constituent of ribosome"/>
    <property type="evidence" value="ECO:0007669"/>
    <property type="project" value="InterPro"/>
</dbReference>
<dbReference type="GO" id="GO:0006412">
    <property type="term" value="P:translation"/>
    <property type="evidence" value="ECO:0007669"/>
    <property type="project" value="UniProtKB-UniRule"/>
</dbReference>
<dbReference type="Gene3D" id="3.30.70.330">
    <property type="match status" value="1"/>
</dbReference>
<dbReference type="HAMAP" id="MF_01369_B">
    <property type="entry name" value="Ribosomal_uL23_B"/>
    <property type="match status" value="1"/>
</dbReference>
<dbReference type="InterPro" id="IPR012677">
    <property type="entry name" value="Nucleotide-bd_a/b_plait_sf"/>
</dbReference>
<dbReference type="InterPro" id="IPR013025">
    <property type="entry name" value="Ribosomal_uL23-like"/>
</dbReference>
<dbReference type="InterPro" id="IPR012678">
    <property type="entry name" value="Ribosomal_uL23/eL15/eS24_sf"/>
</dbReference>
<dbReference type="InterPro" id="IPR001014">
    <property type="entry name" value="Ribosomal_uL23_CS"/>
</dbReference>
<dbReference type="PANTHER" id="PTHR11620">
    <property type="entry name" value="60S RIBOSOMAL PROTEIN L23A"/>
    <property type="match status" value="1"/>
</dbReference>
<dbReference type="Pfam" id="PF00276">
    <property type="entry name" value="Ribosomal_L23"/>
    <property type="match status" value="1"/>
</dbReference>
<dbReference type="SUPFAM" id="SSF54189">
    <property type="entry name" value="Ribosomal proteins S24e, L23 and L15e"/>
    <property type="match status" value="1"/>
</dbReference>
<dbReference type="PROSITE" id="PS00050">
    <property type="entry name" value="RIBOSOMAL_L23"/>
    <property type="match status" value="1"/>
</dbReference>